<keyword id="KW-0002">3D-structure</keyword>
<keyword id="KW-0009">Actin-binding</keyword>
<keyword id="KW-0025">Alternative splicing</keyword>
<keyword id="KW-0067">ATP-binding</keyword>
<keyword id="KW-0112">Calmodulin-binding</keyword>
<keyword id="KW-0966">Cell projection</keyword>
<keyword id="KW-0175">Coiled coil</keyword>
<keyword id="KW-0963">Cytoplasm</keyword>
<keyword id="KW-0206">Cytoskeleton</keyword>
<keyword id="KW-0209">Deafness</keyword>
<keyword id="KW-0225">Disease variant</keyword>
<keyword id="KW-1009">Hearing</keyword>
<keyword id="KW-0505">Motor protein</keyword>
<keyword id="KW-0518">Myosin</keyword>
<keyword id="KW-1010">Non-syndromic deafness</keyword>
<keyword id="KW-0547">Nucleotide-binding</keyword>
<keyword id="KW-1267">Proteomics identification</keyword>
<keyword id="KW-1185">Reference proteome</keyword>
<keyword id="KW-0677">Repeat</keyword>
<keyword id="KW-0728">SH3 domain</keyword>
<sequence length="3530" mass="395293">MAKEEDEEKKAKKGKKGKKAPEPEKPKRSLKGTSRLFMGFRDRTPKISKKGQFRSASAFFWGLHTGPQKTKRKRKARTVLKSTSKLMTQMRMGKKKRAMKGKKPSFMVIRFPGRRGYGRLRPRARSLSKASTAINWLTKKFLLKKAEESGSEQATVDAWLQRSSSRMGSRKLPFPSGAEILRPGGRLRRFPRSRSIYASGEPLGFLPFEDEAPFHHSGSRKSLYGLEGFQDLGEYYDYHRDGDDYYDRQSLHRYEEQEPYLAGLGPYSPAWPPYGDHYYGYPPEDPYDYYHPDYYGGPFDPGYTYGYGYDDYEPPYAPPSGYSSPYSYHDGYEGEAHPYGYYLDPYAPYDAPYPPYDLPYHTPYDVPYFDPYGVHYTVPYAEGVYGGGDEAIYPPEVPYFYPEESASAFVYPWVPPPIPSPHNPYAHAMDDIAELEEPEDAGVERQGTSFRLPSAAFFEQQGMDKPARSKLSLIRKFRLFPRPQVKLFGKEKLEVPLPPSLDIPLPLGDADEEEDEEELPPVSAVPYGHPFWGFLTPRQRNLQRALSAFGAHRGLGFGPEFGRPVPRPATSLARFLKKTLSEKKPIARLRGSQKARAGGPAVREAAYKRFGYKLAGMDPEKPGTPIVLRRAQPRARSSNDARRPPAPQPAPRTLSHWSALLSPPVPPRPPSSGPPPAPPLSPALSGLPRPASPYGSLRRHPPPWAAPAHVPPAPQASWWAFVEPPAVSPEVPPDLLAFPGPRPSFRGSRRRGAAFGFPGASPRASRRRAWSPLASPQPSLRSSPGLGYCSPLAPPSPQLSLRTGPFQPPFLPPARRPRSLQESPAPRRAAGRLGPPGSPLPGSPRPPSPPLGLCHSPRRSSLNLPSRLPHTWRRLSEPPTRAVKPQVRLPFHRPPRAGAWRAPLEHRESPREPEDSETPWTVPPLAPSWDVDMPPTQRPPSPWPGGAGSRRGFSRPPPVPENPFLQLLGPVPSPTLQPEDPAADMTRVFLGRHHEPGPGQLTKSAGPTPEKPEEEATLGDPQLPAETKPPTPAPPKDVTPPKDITPPKDVLPEQKTLRPSLSYPLAACDQTRATWPPWHRWGTLPQAAAPLAPIRAPEPLPKGGERRQAAPGRFAVVMPRVQKLSSFQRVGPATLKPQVQPIQDPKPRACSLRWSCLWLRADAYGPWPRVHTHPQSCHLGPGAACLSLRGSWEEVGPPSWRNKMHSIRNLPSMRFREQHGEDGVEDMTQLEDLQETTVLSNLKIRFERNLIYTYIGSILVSVNPYQMFGIYGPEQVQQYNGRALGENPPHLFAVANLAFAKMLDAKQNQCIIISGESGSGKTEATKLILRYLAAMNQKREVMQQIKILEATPLLESFGNAKTVRNDNSSRFGKFVEIFLEGGVISGAITSQYLLEKSRIVFQAKNERNYHIFYELLAGLPAQLRQAFSLQEAETYYYLNQGGNCEIAGKSDADDFRRLLAAMEVLGFSSEDQDSIFRILASILHLGNVYFEKYETDAQEVASVVSAREIQAVAELLQISPEGLQKAITFKVTETMREKIFTPLTVESAVDARDAIAKVLYALLFSWLITRVNALVSPRQDTLSIAILDIYGFEDLSFNSFEQLCINYANENLQYLFNKIVFQEEQEEYIREQIDWQEITFADNQPCINLISLKPYGILRILDDQCCFPQATDHTFLQKCHYHHGANPLYSKPKMPLPEFTIKHYAGKVTYQVHKFLDKNHDQVRQDVLDLFVRSRTRVVAHLFSSHAPQAAPQRLGKSSSVTRLYKAHTVAAKFQQSLLDLVEKMERCNPLFMRCLKPNHKKEPGLFEPDVVMAQLRYSGVLETVRIRKEGFPVRLPFQGFIDRYCCLVALKHDLPANGDMCVSVLSRLCKVMPNMYRVGVSKLFLKEHLYQLLESMREHVLNLAALTLQRCLRGFFIKRRFRSLRHKIILLQSRARGYLARQRYQQMRRSLVKFRSLVHAYVSRRRYLKLRAEWRCQVEGALLWEQEELSKREVVAVGHLEVPAELAGLLQAVAGLGLAQVPQVAPVRTPRLQAEPRVTLPLDINNYPMAKFVQCHFKEPAFGMLTVPLRTPLTQLPAEHHAEAVSIFKLILRFMGDPHLHGARENIFGNYIVQKGLAVPELRDEILAQLANQVWHNHNAHNAERGWLLLAACLSGFAPSPCFNKYLLKFVSDYGRNGFQAVCQHRLMQAMGRAQQQGSGAARTLPPTQLEWTATYEKASMALDVGCFNGDQFSCPVHSWSTGEEVAGDILRHRGLADGWRGWTVAMKNGVQWAELAGHDYVLDLVSDLELLRDFPRQKSYFIVGTEGPAASRGGPKVVFGNSWDSDEDMSTRPQPQEHMPKVLDSDGYSSHNQDGTNGETEAQRGTATHQESDSLGEPAVPHKGLDCYLDSLFDPVLSYGDADLEKPTAIAYRMKGGGQPGGGSSSGTEDTPRRPPEPKPIPGLDASTLALQQAFIHKQAVLLAREMTLQATALQQQPLSAALRSLPAEKPPAPEAQPTSVGTGPPAKPVLLRATPKPLAPAPLAKAPRLPIKPVAAPVLAQDQASPETTSPSPELVRYSTLNSEHFPQPTQQIKNIVRQYQQPFRGGRPEALRKDGGKVFMKRPDPHEEALMILKGQMTHLAAAPGTQVSREAVALVKPVTSAPRPSMAPTSALPSRSLEPPEELTQTRLHRLINPNFYGYQDAPWKIFLRKEVFYPKDSYSHPVQLDLLFRQILHDTLSEACLRISEDERLRMKALFAQNQLDTQKPLVTESVKRAVVSTARDTWEVYFSRIFPATGSVGTGVQLLAVSHVGIKLLRMVKGGQEAGGQLRVLRAYSFADILFVTMPSQNMLEFNLASEKVILFSARAHQVKTLVDDFILELKKDSDYVVAVRNFLPEDPALLAFHKGDIIHLQPLEPPRVGYSAGCVVRRKVVYLEELRRRGPDFGWRFGTIHGRVGRFPSELVQPAAAPDFLQLPTEPGRGRAAAVAAAVASAAAAQEVGRRREGPPVRARSADHGEDALALPPYTMLEFAQKYFRDPQRRPQDGLRLKSKEPRESRTLEDMLCFTKTPLQESLIELSDSSLSKMATDMFLAVMRFMGDAPLKGQSDLDVLCNLLKLCGDHEVMRDECYCQVVKQITDNTSSKQDSCQRGWRLLYIVTAYHSCSEVLHPHLTRFLQDVSRTPGLPFQGIAKACEQNLQKTLRFGGRLELPSSIELRAMLAGRSSKRQLFLLPGGLERHLKIKTCTVALDVVEEICAEMALTRPEAFNEYVIFVVTNRGQHVCPLSRRAYILDVASEMEQVDGGYMLWFRRVLWDQPLKFENELYVTMHYNQVLPDYLKGLFSSVPASRPSEQLLQQVSKLASLQHRAKDHFYLPSVREVQEYIPAQLYRTTAGSTWLNLVSQHRQQTQALSPHQARAQFLGLLSALPMFGSSFFFIQSCSNIAVPAPCILAINHNGLNFLSTETHELMVKFPLKEIQSTRTQRPTANSSYPYVEIALGDVAAQRTLQLQLEQGLELCRVVAVHVENLLSAHEKRLTLPPSEITLL</sequence>
<protein>
    <recommendedName>
        <fullName>Unconventional myosin-XV</fullName>
    </recommendedName>
    <alternativeName>
        <fullName>Unconventional myosin-15</fullName>
    </alternativeName>
</protein>
<name>MYO15_HUMAN</name>
<feature type="chain" id="PRO_0000123474" description="Unconventional myosin-XV">
    <location>
        <begin position="1"/>
        <end position="3530"/>
    </location>
</feature>
<feature type="domain" description="Myosin motor" evidence="7">
    <location>
        <begin position="1222"/>
        <end position="1899"/>
    </location>
</feature>
<feature type="domain" description="IQ 1" evidence="4">
    <location>
        <begin position="1902"/>
        <end position="1924"/>
    </location>
</feature>
<feature type="domain" description="IQ 2" evidence="4">
    <location>
        <begin position="1925"/>
        <end position="1954"/>
    </location>
</feature>
<feature type="domain" description="IQ 3" evidence="4">
    <location>
        <begin position="1955"/>
        <end position="1976"/>
    </location>
</feature>
<feature type="domain" description="MyTH4 1" evidence="6">
    <location>
        <begin position="2065"/>
        <end position="2217"/>
    </location>
</feature>
<feature type="domain" description="SH3" evidence="5">
    <location>
        <begin position="2867"/>
        <end position="2953"/>
    </location>
</feature>
<feature type="domain" description="MyTH4 2" evidence="6">
    <location>
        <begin position="3050"/>
        <end position="3204"/>
    </location>
</feature>
<feature type="domain" description="FERM" evidence="3">
    <location>
        <begin position="3209"/>
        <end position="3530"/>
    </location>
</feature>
<feature type="region of interest" description="Disordered" evidence="8">
    <location>
        <begin position="1"/>
        <end position="46"/>
    </location>
</feature>
<feature type="region of interest" description="Disordered" evidence="8">
    <location>
        <begin position="615"/>
        <end position="710"/>
    </location>
</feature>
<feature type="region of interest" description="Disordered" evidence="8">
    <location>
        <begin position="730"/>
        <end position="1057"/>
    </location>
</feature>
<feature type="region of interest" description="Actin-binding" evidence="2">
    <location>
        <begin position="1792"/>
        <end position="1799"/>
    </location>
</feature>
<feature type="region of interest" description="Neck or regulatory domain">
    <location>
        <begin position="1888"/>
        <end position="2029"/>
    </location>
</feature>
<feature type="region of interest" description="Tail">
    <location>
        <begin position="2030"/>
        <end position="3530"/>
    </location>
</feature>
<feature type="region of interest" description="Disordered" evidence="8">
    <location>
        <begin position="2311"/>
        <end position="2381"/>
    </location>
</feature>
<feature type="region of interest" description="Disordered" evidence="8">
    <location>
        <begin position="2414"/>
        <end position="2446"/>
    </location>
</feature>
<feature type="region of interest" description="Disordered" evidence="8">
    <location>
        <begin position="2490"/>
        <end position="2509"/>
    </location>
</feature>
<feature type="region of interest" description="Disordered" evidence="8">
    <location>
        <begin position="2644"/>
        <end position="2665"/>
    </location>
</feature>
<feature type="coiled-coil region" evidence="2">
    <location>
        <begin position="1323"/>
        <end position="1350"/>
    </location>
</feature>
<feature type="compositionally biased region" description="Pro residues" evidence="8">
    <location>
        <begin position="663"/>
        <end position="681"/>
    </location>
</feature>
<feature type="compositionally biased region" description="Low complexity" evidence="8">
    <location>
        <begin position="682"/>
        <end position="693"/>
    </location>
</feature>
<feature type="compositionally biased region" description="Low complexity" evidence="8">
    <location>
        <begin position="753"/>
        <end position="763"/>
    </location>
</feature>
<feature type="compositionally biased region" description="Low complexity" evidence="8">
    <location>
        <begin position="823"/>
        <end position="835"/>
    </location>
</feature>
<feature type="compositionally biased region" description="Pro residues" evidence="8">
    <location>
        <begin position="836"/>
        <end position="850"/>
    </location>
</feature>
<feature type="compositionally biased region" description="Low complexity" evidence="8">
    <location>
        <begin position="859"/>
        <end position="869"/>
    </location>
</feature>
<feature type="compositionally biased region" description="Basic and acidic residues" evidence="8">
    <location>
        <begin position="903"/>
        <end position="913"/>
    </location>
</feature>
<feature type="compositionally biased region" description="Pro residues" evidence="8">
    <location>
        <begin position="1027"/>
        <end position="1038"/>
    </location>
</feature>
<feature type="compositionally biased region" description="Polar residues" evidence="8">
    <location>
        <begin position="2349"/>
        <end position="2371"/>
    </location>
</feature>
<feature type="compositionally biased region" description="Gly residues" evidence="8">
    <location>
        <begin position="2417"/>
        <end position="2427"/>
    </location>
</feature>
<feature type="binding site" evidence="2">
    <location>
        <begin position="1315"/>
        <end position="1322"/>
    </location>
    <ligand>
        <name>ATP</name>
        <dbReference type="ChEBI" id="CHEBI:30616"/>
    </ligand>
</feature>
<feature type="splice variant" id="VSP_056655" description="In isoform 2." evidence="14">
    <location>
        <begin position="1"/>
        <end position="2736"/>
    </location>
</feature>
<feature type="splice variant" id="VSP_056656" description="In isoform 2." evidence="14">
    <original>GLELCRVVAVHVENLLSAHEKRLTLPPSEITLL</original>
    <variation>VRAGEVLDGRGLSLSPAGTGTVSCGGRARGEPAQCP</variation>
    <location>
        <begin position="3498"/>
        <end position="3530"/>
    </location>
</feature>
<feature type="sequence variant" id="VAR_071648" description="In DFNB3; dbSNP:rs2046369302." evidence="12">
    <original>L</original>
    <variation>P</variation>
    <location>
        <position position="1806"/>
    </location>
</feature>
<feature type="sequence variant" id="VAR_037959" description="In dbSNP:rs854777.">
    <original>C</original>
    <variation>R</variation>
    <location>
        <position position="1977"/>
    </location>
</feature>
<feature type="sequence variant" id="VAR_037960" description="In dbSNP:rs2272571.">
    <original>G</original>
    <variation>R</variation>
    <location>
        <position position="2018"/>
    </location>
</feature>
<feature type="sequence variant" id="VAR_010303" description="In DFNB3; family from Bengkala; dbSNP:rs121908966." evidence="13">
    <original>N</original>
    <variation>Y</variation>
    <location>
        <position position="2111"/>
    </location>
</feature>
<feature type="sequence variant" id="VAR_010304" description="In DFNB3; Indian family; dbSNP:rs121908965." evidence="13">
    <original>I</original>
    <variation>F</variation>
    <location>
        <position position="2113"/>
    </location>
</feature>
<feature type="sequence variant" id="VAR_037961" description="In dbSNP:rs121908970." evidence="10">
    <original>T</original>
    <variation>I</variation>
    <location>
        <position position="2205"/>
    </location>
</feature>
<feature type="sequence variant" id="VAR_037962" description="In dbSNP:rs16960959.">
    <original>A</original>
    <variation>T</variation>
    <location>
        <position position="2490"/>
    </location>
</feature>
<feature type="sequence variant" id="VAR_037963" description="In dbSNP:rs712270.">
    <original>Y</original>
    <variation>F</variation>
    <location>
        <position position="2682"/>
    </location>
</feature>
<feature type="sequence variant" id="VAR_037964" description="In DFNB3; dbSNP:rs121908969." evidence="10">
    <original>Q</original>
    <variation>H</variation>
    <location>
        <position position="2716"/>
    </location>
</feature>
<feature type="sequence conflict" description="In Ref. 2; AAF05903/AF051976." evidence="15" ref="2">
    <original>A</original>
    <variation>T</variation>
    <location>
        <position position="595"/>
    </location>
</feature>
<feature type="sequence conflict" description="In Ref. 2; AAF05903/AF051976." evidence="15" ref="2">
    <original>W</original>
    <variation>G</variation>
    <location>
        <position position="718"/>
    </location>
</feature>
<feature type="sequence conflict" description="In Ref. 2; AAF05903." evidence="15" ref="2">
    <original>C</original>
    <variation>R</variation>
    <location>
        <position position="1646"/>
    </location>
</feature>
<feature type="sequence conflict" description="In Ref. 2; AAF05903." evidence="15" ref="2">
    <original>E</original>
    <variation>G</variation>
    <location>
        <position position="2468"/>
    </location>
</feature>
<feature type="strand" evidence="16">
    <location>
        <begin position="3526"/>
        <end position="3530"/>
    </location>
</feature>
<organism>
    <name type="scientific">Homo sapiens</name>
    <name type="common">Human</name>
    <dbReference type="NCBI Taxonomy" id="9606"/>
    <lineage>
        <taxon>Eukaryota</taxon>
        <taxon>Metazoa</taxon>
        <taxon>Chordata</taxon>
        <taxon>Craniata</taxon>
        <taxon>Vertebrata</taxon>
        <taxon>Euteleostomi</taxon>
        <taxon>Mammalia</taxon>
        <taxon>Eutheria</taxon>
        <taxon>Euarchontoglires</taxon>
        <taxon>Primates</taxon>
        <taxon>Haplorrhini</taxon>
        <taxon>Catarrhini</taxon>
        <taxon>Hominidae</taxon>
        <taxon>Homo</taxon>
    </lineage>
</organism>
<accession>Q9UKN7</accession>
<accession>B4DFC7</accession>
<evidence type="ECO:0000250" key="1"/>
<evidence type="ECO:0000255" key="2"/>
<evidence type="ECO:0000255" key="3">
    <source>
        <dbReference type="PROSITE-ProRule" id="PRU00084"/>
    </source>
</evidence>
<evidence type="ECO:0000255" key="4">
    <source>
        <dbReference type="PROSITE-ProRule" id="PRU00116"/>
    </source>
</evidence>
<evidence type="ECO:0000255" key="5">
    <source>
        <dbReference type="PROSITE-ProRule" id="PRU00192"/>
    </source>
</evidence>
<evidence type="ECO:0000255" key="6">
    <source>
        <dbReference type="PROSITE-ProRule" id="PRU00359"/>
    </source>
</evidence>
<evidence type="ECO:0000255" key="7">
    <source>
        <dbReference type="PROSITE-ProRule" id="PRU00782"/>
    </source>
</evidence>
<evidence type="ECO:0000256" key="8">
    <source>
        <dbReference type="SAM" id="MobiDB-lite"/>
    </source>
</evidence>
<evidence type="ECO:0000269" key="9">
    <source>
    </source>
</evidence>
<evidence type="ECO:0000269" key="10">
    <source>
    </source>
</evidence>
<evidence type="ECO:0000269" key="11">
    <source>
    </source>
</evidence>
<evidence type="ECO:0000269" key="12">
    <source>
    </source>
</evidence>
<evidence type="ECO:0000269" key="13">
    <source>
    </source>
</evidence>
<evidence type="ECO:0000303" key="14">
    <source>
    </source>
</evidence>
<evidence type="ECO:0000305" key="15"/>
<evidence type="ECO:0007829" key="16">
    <source>
        <dbReference type="PDB" id="6KZ1"/>
    </source>
</evidence>
<proteinExistence type="evidence at protein level"/>
<gene>
    <name type="primary">MYO15A</name>
    <name type="synonym">MYO15</name>
</gene>
<comment type="function">
    <text evidence="1">Myosins are actin-based motor molecules with ATPase activity. Unconventional myosins serve in intracellular movements. Their highly divergent tails are presumed to bind to membranous compartments, which would be moved relative to actin filaments. Required for the arrangement of stereocilia in mature hair bundles (By similarity).</text>
</comment>
<comment type="subunit">
    <text evidence="1 11">Interacts with the third PDZ domain of WHRN which is necessary for localization of WHRN to stereocilium tips. Interacts with EPS8 (By similarity). Interacts with FASLG.</text>
</comment>
<comment type="subcellular location">
    <subcellularLocation>
        <location evidence="1">Cell projection</location>
        <location evidence="1">Stereocilium</location>
    </subcellularLocation>
    <subcellularLocation>
        <location evidence="1">Cytoplasm</location>
        <location evidence="1">Cytoskeleton</location>
    </subcellularLocation>
    <text evidence="1">Localizes to stereocilium tips in cochlear and vestibular hair cells.</text>
</comment>
<comment type="alternative products">
    <event type="alternative splicing"/>
    <isoform>
        <id>Q9UKN7-1</id>
        <name>1</name>
        <sequence type="displayed"/>
    </isoform>
    <isoform>
        <id>Q9UKN7-2</id>
        <name>2</name>
        <sequence type="described" ref="VSP_056655 VSP_056656"/>
    </isoform>
</comment>
<comment type="tissue specificity">
    <text evidence="9">Highly expressed in pituitary. Also expressed at lower levels in adult brain, kidney, liver, lung, pancreas, placenta and skeletal muscle. Not expressed in brain. In the pituitary, highly expressed in anterior gland cells.</text>
</comment>
<comment type="disease" evidence="10 12 13">
    <disease id="DI-00855">
        <name>Deafness, autosomal recessive, 3</name>
        <acronym>DFNB3</acronym>
        <description>A form of non-syndromic sensorineural hearing loss. Sensorineural deafness results from damage to the neural receptors of the inner ear, the nerve pathways to the brain, or the area of the brain that receives sound information.</description>
        <dbReference type="MIM" id="600316"/>
    </disease>
    <text>The disease is caused by variants affecting the gene represented in this entry.</text>
</comment>
<comment type="similarity">
    <text evidence="15">Belongs to the TRAFAC class myosin-kinesin ATPase superfamily. Myosin family.</text>
</comment>
<comment type="caution">
    <text evidence="15">Represents an unconventional myosin. This protein should not be confused with the conventional myosin-15 (MYH15).</text>
</comment>
<dbReference type="EMBL" id="AF051976">
    <property type="status" value="NOT_ANNOTATED_CDS"/>
    <property type="molecule type" value="Genomic_DNA"/>
</dbReference>
<dbReference type="EMBL" id="AF144094">
    <property type="protein sequence ID" value="AAF05903.1"/>
    <property type="molecule type" value="mRNA"/>
</dbReference>
<dbReference type="EMBL" id="AK294036">
    <property type="protein sequence ID" value="BAG57388.1"/>
    <property type="molecule type" value="mRNA"/>
</dbReference>
<dbReference type="EMBL" id="AC087164">
    <property type="status" value="NOT_ANNOTATED_CDS"/>
    <property type="molecule type" value="Genomic_DNA"/>
</dbReference>
<dbReference type="CCDS" id="CCDS42271.1">
    <molecule id="Q9UKN7-1"/>
</dbReference>
<dbReference type="PIR" id="A59266">
    <property type="entry name" value="A59266"/>
</dbReference>
<dbReference type="RefSeq" id="NP_057323.3">
    <molecule id="Q9UKN7-1"/>
    <property type="nucleotide sequence ID" value="NM_016239.3"/>
</dbReference>
<dbReference type="PDB" id="6KZ1">
    <property type="method" value="X-ray"/>
    <property type="resolution" value="1.69 A"/>
    <property type="chains" value="B=3517-3530"/>
</dbReference>
<dbReference type="PDBsum" id="6KZ1"/>
<dbReference type="SMR" id="Q9UKN7"/>
<dbReference type="BioGRID" id="119348">
    <property type="interactions" value="11"/>
</dbReference>
<dbReference type="FunCoup" id="Q9UKN7">
    <property type="interactions" value="135"/>
</dbReference>
<dbReference type="IntAct" id="Q9UKN7">
    <property type="interactions" value="5"/>
</dbReference>
<dbReference type="STRING" id="9606.ENSP00000495481"/>
<dbReference type="BindingDB" id="Q9UKN7"/>
<dbReference type="ChEMBL" id="CHEMBL4295979"/>
<dbReference type="GlyGen" id="Q9UKN7">
    <property type="glycosylation" value="3 sites, 1 O-linked glycan (1 site)"/>
</dbReference>
<dbReference type="iPTMnet" id="Q9UKN7"/>
<dbReference type="PhosphoSitePlus" id="Q9UKN7"/>
<dbReference type="BioMuta" id="MYO15A"/>
<dbReference type="DMDM" id="296439233"/>
<dbReference type="jPOST" id="Q9UKN7"/>
<dbReference type="MassIVE" id="Q9UKN7"/>
<dbReference type="PaxDb" id="9606-ENSP00000205890"/>
<dbReference type="PeptideAtlas" id="Q9UKN7"/>
<dbReference type="ProteomicsDB" id="84825">
    <molecule id="Q9UKN7-1"/>
</dbReference>
<dbReference type="Antibodypedia" id="58384">
    <property type="antibodies" value="32 antibodies from 12 providers"/>
</dbReference>
<dbReference type="DNASU" id="51168"/>
<dbReference type="Ensembl" id="ENST00000418233.7">
    <molecule id="Q9UKN7-2"/>
    <property type="protein sequence ID" value="ENSP00000408800.3"/>
    <property type="gene ID" value="ENSG00000091536.20"/>
</dbReference>
<dbReference type="Ensembl" id="ENST00000647165.2">
    <molecule id="Q9UKN7-1"/>
    <property type="protein sequence ID" value="ENSP00000495481.1"/>
    <property type="gene ID" value="ENSG00000091536.20"/>
</dbReference>
<dbReference type="GeneID" id="51168"/>
<dbReference type="KEGG" id="hsa:51168"/>
<dbReference type="MANE-Select" id="ENST00000647165.2">
    <property type="protein sequence ID" value="ENSP00000495481.1"/>
    <property type="RefSeq nucleotide sequence ID" value="NM_016239.4"/>
    <property type="RefSeq protein sequence ID" value="NP_057323.3"/>
</dbReference>
<dbReference type="UCSC" id="uc010vxi.3">
    <molecule id="Q9UKN7-1"/>
    <property type="organism name" value="human"/>
</dbReference>
<dbReference type="AGR" id="HGNC:7594"/>
<dbReference type="CTD" id="51168"/>
<dbReference type="DisGeNET" id="51168"/>
<dbReference type="GeneCards" id="MYO15A"/>
<dbReference type="GeneReviews" id="MYO15A"/>
<dbReference type="HGNC" id="HGNC:7594">
    <property type="gene designation" value="MYO15A"/>
</dbReference>
<dbReference type="HPA" id="ENSG00000091536">
    <property type="expression patterns" value="Tissue enriched (pituitary)"/>
</dbReference>
<dbReference type="MalaCards" id="MYO15A"/>
<dbReference type="MIM" id="600316">
    <property type="type" value="phenotype"/>
</dbReference>
<dbReference type="MIM" id="602666">
    <property type="type" value="gene"/>
</dbReference>
<dbReference type="neXtProt" id="NX_Q9UKN7"/>
<dbReference type="NIAGADS" id="ENSG00000091536"/>
<dbReference type="OpenTargets" id="ENSG00000091536"/>
<dbReference type="Orphanet" id="90636">
    <property type="disease" value="Rare autosomal recessive non-syndromic sensorineural deafness type DFNB"/>
</dbReference>
<dbReference type="PharmGKB" id="PA31395"/>
<dbReference type="VEuPathDB" id="HostDB:ENSG00000091536"/>
<dbReference type="eggNOG" id="KOG4229">
    <property type="taxonomic scope" value="Eukaryota"/>
</dbReference>
<dbReference type="GeneTree" id="ENSGT00940000155335"/>
<dbReference type="HOGENOM" id="CLU_021039_0_0_1"/>
<dbReference type="InParanoid" id="Q9UKN7"/>
<dbReference type="OMA" id="NGHGEMI"/>
<dbReference type="OrthoDB" id="8182952at2759"/>
<dbReference type="PAN-GO" id="Q9UKN7">
    <property type="GO annotations" value="8 GO annotations based on evolutionary models"/>
</dbReference>
<dbReference type="PhylomeDB" id="Q9UKN7"/>
<dbReference type="TreeFam" id="TF316834"/>
<dbReference type="PathwayCommons" id="Q9UKN7"/>
<dbReference type="Reactome" id="R-HSA-9662360">
    <property type="pathway name" value="Sensory processing of sound by inner hair cells of the cochlea"/>
</dbReference>
<dbReference type="Reactome" id="R-HSA-9662361">
    <property type="pathway name" value="Sensory processing of sound by outer hair cells of the cochlea"/>
</dbReference>
<dbReference type="SignaLink" id="Q9UKN7"/>
<dbReference type="BioGRID-ORCS" id="51168">
    <property type="hits" value="26 hits in 1149 CRISPR screens"/>
</dbReference>
<dbReference type="CD-CODE" id="FF4792F2">
    <property type="entry name" value="Row 1-specific tip complex condensates"/>
</dbReference>
<dbReference type="ChiTaRS" id="MYO15A">
    <property type="organism name" value="human"/>
</dbReference>
<dbReference type="GeneWiki" id="MYO15A"/>
<dbReference type="GenomeRNAi" id="51168"/>
<dbReference type="Pharos" id="Q9UKN7">
    <property type="development level" value="Tbio"/>
</dbReference>
<dbReference type="PRO" id="PR:Q9UKN7"/>
<dbReference type="Proteomes" id="UP000005640">
    <property type="component" value="Chromosome 17"/>
</dbReference>
<dbReference type="RNAct" id="Q9UKN7">
    <property type="molecule type" value="protein"/>
</dbReference>
<dbReference type="Bgee" id="ENSG00000091536">
    <property type="expression patterns" value="Expressed in pituitary gland and 101 other cell types or tissues"/>
</dbReference>
<dbReference type="ExpressionAtlas" id="Q9UKN7">
    <property type="expression patterns" value="baseline and differential"/>
</dbReference>
<dbReference type="GO" id="GO:0015629">
    <property type="term" value="C:actin cytoskeleton"/>
    <property type="evidence" value="ECO:0000318"/>
    <property type="project" value="GO_Central"/>
</dbReference>
<dbReference type="GO" id="GO:0098858">
    <property type="term" value="C:actin-based cell projection"/>
    <property type="evidence" value="ECO:0000318"/>
    <property type="project" value="GO_Central"/>
</dbReference>
<dbReference type="GO" id="GO:0005737">
    <property type="term" value="C:cytoplasm"/>
    <property type="evidence" value="ECO:0000318"/>
    <property type="project" value="GO_Central"/>
</dbReference>
<dbReference type="GO" id="GO:0070062">
    <property type="term" value="C:extracellular exosome"/>
    <property type="evidence" value="ECO:0007005"/>
    <property type="project" value="UniProtKB"/>
</dbReference>
<dbReference type="GO" id="GO:0016020">
    <property type="term" value="C:membrane"/>
    <property type="evidence" value="ECO:0000318"/>
    <property type="project" value="GO_Central"/>
</dbReference>
<dbReference type="GO" id="GO:0016459">
    <property type="term" value="C:myosin complex"/>
    <property type="evidence" value="ECO:0007669"/>
    <property type="project" value="UniProtKB-KW"/>
</dbReference>
<dbReference type="GO" id="GO:0032420">
    <property type="term" value="C:stereocilium"/>
    <property type="evidence" value="ECO:0007669"/>
    <property type="project" value="UniProtKB-SubCell"/>
</dbReference>
<dbReference type="GO" id="GO:0051015">
    <property type="term" value="F:actin filament binding"/>
    <property type="evidence" value="ECO:0000318"/>
    <property type="project" value="GO_Central"/>
</dbReference>
<dbReference type="GO" id="GO:0005524">
    <property type="term" value="F:ATP binding"/>
    <property type="evidence" value="ECO:0007669"/>
    <property type="project" value="UniProtKB-KW"/>
</dbReference>
<dbReference type="GO" id="GO:0005516">
    <property type="term" value="F:calmodulin binding"/>
    <property type="evidence" value="ECO:0007669"/>
    <property type="project" value="UniProtKB-KW"/>
</dbReference>
<dbReference type="GO" id="GO:0000146">
    <property type="term" value="F:microfilament motor activity"/>
    <property type="evidence" value="ECO:0000318"/>
    <property type="project" value="GO_Central"/>
</dbReference>
<dbReference type="GO" id="GO:0007015">
    <property type="term" value="P:actin filament organization"/>
    <property type="evidence" value="ECO:0000318"/>
    <property type="project" value="GO_Central"/>
</dbReference>
<dbReference type="GO" id="GO:0042472">
    <property type="term" value="P:inner ear morphogenesis"/>
    <property type="evidence" value="ECO:0007669"/>
    <property type="project" value="Ensembl"/>
</dbReference>
<dbReference type="GO" id="GO:0007626">
    <property type="term" value="P:locomotory behavior"/>
    <property type="evidence" value="ECO:0007669"/>
    <property type="project" value="Ensembl"/>
</dbReference>
<dbReference type="GO" id="GO:0009416">
    <property type="term" value="P:response to light stimulus"/>
    <property type="evidence" value="ECO:0007669"/>
    <property type="project" value="Ensembl"/>
</dbReference>
<dbReference type="GO" id="GO:0007605">
    <property type="term" value="P:sensory perception of sound"/>
    <property type="evidence" value="ECO:0000304"/>
    <property type="project" value="ProtInc"/>
</dbReference>
<dbReference type="CDD" id="cd14473">
    <property type="entry name" value="FERM_B-lobe"/>
    <property type="match status" value="1"/>
</dbReference>
<dbReference type="CDD" id="cd13201">
    <property type="entry name" value="FERM_C_MyoXV"/>
    <property type="match status" value="1"/>
</dbReference>
<dbReference type="CDD" id="cd01387">
    <property type="entry name" value="MYSc_Myo15"/>
    <property type="match status" value="1"/>
</dbReference>
<dbReference type="CDD" id="cd12067">
    <property type="entry name" value="SH3_MYO15A"/>
    <property type="match status" value="1"/>
</dbReference>
<dbReference type="FunFam" id="1.10.10.820:FF:000001">
    <property type="entry name" value="Myosin heavy chain"/>
    <property type="match status" value="1"/>
</dbReference>
<dbReference type="FunFam" id="1.20.5.190:FF:000060">
    <property type="entry name" value="Myosin XVA"/>
    <property type="match status" value="1"/>
</dbReference>
<dbReference type="FunFam" id="1.25.40.530:FF:000009">
    <property type="entry name" value="Myosin XVA"/>
    <property type="match status" value="1"/>
</dbReference>
<dbReference type="FunFam" id="2.30.30.40:FF:000201">
    <property type="entry name" value="Myosin XVA"/>
    <property type="match status" value="1"/>
</dbReference>
<dbReference type="FunFam" id="1.20.58.530:FF:000005">
    <property type="entry name" value="unconventional myosin-IXa isoform X1"/>
    <property type="match status" value="1"/>
</dbReference>
<dbReference type="FunFam" id="1.25.40.530:FF:000008">
    <property type="entry name" value="unconventional myosin-XV"/>
    <property type="match status" value="1"/>
</dbReference>
<dbReference type="Gene3D" id="1.10.10.820">
    <property type="match status" value="1"/>
</dbReference>
<dbReference type="Gene3D" id="1.20.5.190">
    <property type="match status" value="1"/>
</dbReference>
<dbReference type="Gene3D" id="1.20.58.530">
    <property type="match status" value="1"/>
</dbReference>
<dbReference type="Gene3D" id="6.20.240.20">
    <property type="match status" value="1"/>
</dbReference>
<dbReference type="Gene3D" id="3.40.850.10">
    <property type="entry name" value="Kinesin motor domain"/>
    <property type="match status" value="1"/>
</dbReference>
<dbReference type="Gene3D" id="1.20.120.720">
    <property type="entry name" value="Myosin VI head, motor domain, U50 subdomain"/>
    <property type="match status" value="1"/>
</dbReference>
<dbReference type="Gene3D" id="1.25.40.530">
    <property type="entry name" value="MyTH4 domain"/>
    <property type="match status" value="2"/>
</dbReference>
<dbReference type="Gene3D" id="2.30.29.30">
    <property type="entry name" value="Pleckstrin-homology domain (PH domain)/Phosphotyrosine-binding domain (PTB)"/>
    <property type="match status" value="1"/>
</dbReference>
<dbReference type="Gene3D" id="2.30.30.40">
    <property type="entry name" value="SH3 Domains"/>
    <property type="match status" value="1"/>
</dbReference>
<dbReference type="InterPro" id="IPR019749">
    <property type="entry name" value="Band_41_domain"/>
</dbReference>
<dbReference type="InterPro" id="IPR035963">
    <property type="entry name" value="FERM_2"/>
</dbReference>
<dbReference type="InterPro" id="IPR019748">
    <property type="entry name" value="FERM_central"/>
</dbReference>
<dbReference type="InterPro" id="IPR000299">
    <property type="entry name" value="FERM_domain"/>
</dbReference>
<dbReference type="InterPro" id="IPR000048">
    <property type="entry name" value="IQ_motif_EF-hand-BS"/>
</dbReference>
<dbReference type="InterPro" id="IPR036961">
    <property type="entry name" value="Kinesin_motor_dom_sf"/>
</dbReference>
<dbReference type="InterPro" id="IPR001609">
    <property type="entry name" value="Myosin_head_motor_dom-like"/>
</dbReference>
<dbReference type="InterPro" id="IPR041795">
    <property type="entry name" value="MyoXV_FERM_C"/>
</dbReference>
<dbReference type="InterPro" id="IPR036057">
    <property type="entry name" value="MYSc_Myo15"/>
</dbReference>
<dbReference type="InterPro" id="IPR000857">
    <property type="entry name" value="MyTH4_dom"/>
</dbReference>
<dbReference type="InterPro" id="IPR038185">
    <property type="entry name" value="MyTH4_dom_sf"/>
</dbReference>
<dbReference type="InterPro" id="IPR027417">
    <property type="entry name" value="P-loop_NTPase"/>
</dbReference>
<dbReference type="InterPro" id="IPR011993">
    <property type="entry name" value="PH-like_dom_sf"/>
</dbReference>
<dbReference type="InterPro" id="IPR036028">
    <property type="entry name" value="SH3-like_dom_sf"/>
</dbReference>
<dbReference type="InterPro" id="IPR001452">
    <property type="entry name" value="SH3_domain"/>
</dbReference>
<dbReference type="InterPro" id="IPR051567">
    <property type="entry name" value="Unconventional_Myosin_ATPase"/>
</dbReference>
<dbReference type="PANTHER" id="PTHR22692">
    <property type="entry name" value="MYOSIN VII, XV"/>
    <property type="match status" value="1"/>
</dbReference>
<dbReference type="PANTHER" id="PTHR22692:SF21">
    <property type="entry name" value="MYOSIN XVA"/>
    <property type="match status" value="1"/>
</dbReference>
<dbReference type="Pfam" id="PF00373">
    <property type="entry name" value="FERM_M"/>
    <property type="match status" value="1"/>
</dbReference>
<dbReference type="Pfam" id="PF00612">
    <property type="entry name" value="IQ"/>
    <property type="match status" value="1"/>
</dbReference>
<dbReference type="Pfam" id="PF00063">
    <property type="entry name" value="Myosin_head"/>
    <property type="match status" value="1"/>
</dbReference>
<dbReference type="Pfam" id="PF00784">
    <property type="entry name" value="MyTH4"/>
    <property type="match status" value="2"/>
</dbReference>
<dbReference type="Pfam" id="PF07653">
    <property type="entry name" value="SH3_2"/>
    <property type="match status" value="1"/>
</dbReference>
<dbReference type="PRINTS" id="PR00193">
    <property type="entry name" value="MYOSINHEAVY"/>
</dbReference>
<dbReference type="SMART" id="SM00295">
    <property type="entry name" value="B41"/>
    <property type="match status" value="1"/>
</dbReference>
<dbReference type="SMART" id="SM00015">
    <property type="entry name" value="IQ"/>
    <property type="match status" value="3"/>
</dbReference>
<dbReference type="SMART" id="SM00242">
    <property type="entry name" value="MYSc"/>
    <property type="match status" value="1"/>
</dbReference>
<dbReference type="SMART" id="SM00139">
    <property type="entry name" value="MyTH4"/>
    <property type="match status" value="2"/>
</dbReference>
<dbReference type="SMART" id="SM00326">
    <property type="entry name" value="SH3"/>
    <property type="match status" value="1"/>
</dbReference>
<dbReference type="SUPFAM" id="SSF52540">
    <property type="entry name" value="P-loop containing nucleoside triphosphate hydrolases"/>
    <property type="match status" value="1"/>
</dbReference>
<dbReference type="SUPFAM" id="SSF47031">
    <property type="entry name" value="Second domain of FERM"/>
    <property type="match status" value="1"/>
</dbReference>
<dbReference type="SUPFAM" id="SSF50044">
    <property type="entry name" value="SH3-domain"/>
    <property type="match status" value="1"/>
</dbReference>
<dbReference type="PROSITE" id="PS50057">
    <property type="entry name" value="FERM_3"/>
    <property type="match status" value="1"/>
</dbReference>
<dbReference type="PROSITE" id="PS50096">
    <property type="entry name" value="IQ"/>
    <property type="match status" value="3"/>
</dbReference>
<dbReference type="PROSITE" id="PS51456">
    <property type="entry name" value="MYOSIN_MOTOR"/>
    <property type="match status" value="1"/>
</dbReference>
<dbReference type="PROSITE" id="PS51016">
    <property type="entry name" value="MYTH4"/>
    <property type="match status" value="2"/>
</dbReference>
<dbReference type="PROSITE" id="PS50002">
    <property type="entry name" value="SH3"/>
    <property type="match status" value="1"/>
</dbReference>
<reference key="1">
    <citation type="journal article" date="1998" name="Science">
        <title>Association of unconventional myosin MYO15 mutations with human nonsyndromic deafness DFNB3.</title>
        <authorList>
            <person name="Wang A."/>
            <person name="Liang Y."/>
            <person name="Fridell R.A."/>
            <person name="Probst F.J."/>
            <person name="Wilcox E.R."/>
            <person name="Touchman J.W."/>
            <person name="Morton C.C."/>
            <person name="Morell R.J."/>
            <person name="Noben-Trauth K."/>
            <person name="Camper S.A."/>
            <person name="Friedman T.B."/>
        </authorList>
    </citation>
    <scope>NUCLEOTIDE SEQUENCE [GENOMIC DNA]</scope>
    <scope>VARIANTS DFNB3 TYR-2111 AND PHE-2113</scope>
</reference>
<reference key="2">
    <citation type="journal article" date="1999" name="Genomics">
        <title>Characterization of the human and mouse unconventional myosin XV genes responsible for hereditary deafness DFNB3 and shaker 2.</title>
        <authorList>
            <person name="Liang Y."/>
            <person name="Wang A."/>
            <person name="Belyantseva I.A."/>
            <person name="Anderson D.W."/>
            <person name="Probst F.J."/>
            <person name="Barber T.D."/>
            <person name="Miller W."/>
            <person name="Touchman J.W."/>
            <person name="Jin L."/>
            <person name="Sullivan S.L."/>
            <person name="Sellers J.R."/>
            <person name="Camper S.A."/>
            <person name="Lloyd R.V."/>
            <person name="Kachar B."/>
            <person name="Friedman T.B."/>
            <person name="Fridell R.A."/>
        </authorList>
    </citation>
    <scope>NUCLEOTIDE SEQUENCE [GENOMIC DNA / MRNA] (ISOFORM 1)</scope>
    <scope>TISSUE SPECIFICITY</scope>
</reference>
<reference key="3">
    <citation type="journal article" date="2004" name="Nat. Genet.">
        <title>Complete sequencing and characterization of 21,243 full-length human cDNAs.</title>
        <authorList>
            <person name="Ota T."/>
            <person name="Suzuki Y."/>
            <person name="Nishikawa T."/>
            <person name="Otsuki T."/>
            <person name="Sugiyama T."/>
            <person name="Irie R."/>
            <person name="Wakamatsu A."/>
            <person name="Hayashi K."/>
            <person name="Sato H."/>
            <person name="Nagai K."/>
            <person name="Kimura K."/>
            <person name="Makita H."/>
            <person name="Sekine M."/>
            <person name="Obayashi M."/>
            <person name="Nishi T."/>
            <person name="Shibahara T."/>
            <person name="Tanaka T."/>
            <person name="Ishii S."/>
            <person name="Yamamoto J."/>
            <person name="Saito K."/>
            <person name="Kawai Y."/>
            <person name="Isono Y."/>
            <person name="Nakamura Y."/>
            <person name="Nagahari K."/>
            <person name="Murakami K."/>
            <person name="Yasuda T."/>
            <person name="Iwayanagi T."/>
            <person name="Wagatsuma M."/>
            <person name="Shiratori A."/>
            <person name="Sudo H."/>
            <person name="Hosoiri T."/>
            <person name="Kaku Y."/>
            <person name="Kodaira H."/>
            <person name="Kondo H."/>
            <person name="Sugawara M."/>
            <person name="Takahashi M."/>
            <person name="Kanda K."/>
            <person name="Yokoi T."/>
            <person name="Furuya T."/>
            <person name="Kikkawa E."/>
            <person name="Omura Y."/>
            <person name="Abe K."/>
            <person name="Kamihara K."/>
            <person name="Katsuta N."/>
            <person name="Sato K."/>
            <person name="Tanikawa M."/>
            <person name="Yamazaki M."/>
            <person name="Ninomiya K."/>
            <person name="Ishibashi T."/>
            <person name="Yamashita H."/>
            <person name="Murakawa K."/>
            <person name="Fujimori K."/>
            <person name="Tanai H."/>
            <person name="Kimata M."/>
            <person name="Watanabe M."/>
            <person name="Hiraoka S."/>
            <person name="Chiba Y."/>
            <person name="Ishida S."/>
            <person name="Ono Y."/>
            <person name="Takiguchi S."/>
            <person name="Watanabe S."/>
            <person name="Yosida M."/>
            <person name="Hotuta T."/>
            <person name="Kusano J."/>
            <person name="Kanehori K."/>
            <person name="Takahashi-Fujii A."/>
            <person name="Hara H."/>
            <person name="Tanase T.-O."/>
            <person name="Nomura Y."/>
            <person name="Togiya S."/>
            <person name="Komai F."/>
            <person name="Hara R."/>
            <person name="Takeuchi K."/>
            <person name="Arita M."/>
            <person name="Imose N."/>
            <person name="Musashino K."/>
            <person name="Yuuki H."/>
            <person name="Oshima A."/>
            <person name="Sasaki N."/>
            <person name="Aotsuka S."/>
            <person name="Yoshikawa Y."/>
            <person name="Matsunawa H."/>
            <person name="Ichihara T."/>
            <person name="Shiohata N."/>
            <person name="Sano S."/>
            <person name="Moriya S."/>
            <person name="Momiyama H."/>
            <person name="Satoh N."/>
            <person name="Takami S."/>
            <person name="Terashima Y."/>
            <person name="Suzuki O."/>
            <person name="Nakagawa S."/>
            <person name="Senoh A."/>
            <person name="Mizoguchi H."/>
            <person name="Goto Y."/>
            <person name="Shimizu F."/>
            <person name="Wakebe H."/>
            <person name="Hishigaki H."/>
            <person name="Watanabe T."/>
            <person name="Sugiyama A."/>
            <person name="Takemoto M."/>
            <person name="Kawakami B."/>
            <person name="Yamazaki M."/>
            <person name="Watanabe K."/>
            <person name="Kumagai A."/>
            <person name="Itakura S."/>
            <person name="Fukuzumi Y."/>
            <person name="Fujimori Y."/>
            <person name="Komiyama M."/>
            <person name="Tashiro H."/>
            <person name="Tanigami A."/>
            <person name="Fujiwara T."/>
            <person name="Ono T."/>
            <person name="Yamada K."/>
            <person name="Fujii Y."/>
            <person name="Ozaki K."/>
            <person name="Hirao M."/>
            <person name="Ohmori Y."/>
            <person name="Kawabata A."/>
            <person name="Hikiji T."/>
            <person name="Kobatake N."/>
            <person name="Inagaki H."/>
            <person name="Ikema Y."/>
            <person name="Okamoto S."/>
            <person name="Okitani R."/>
            <person name="Kawakami T."/>
            <person name="Noguchi S."/>
            <person name="Itoh T."/>
            <person name="Shigeta K."/>
            <person name="Senba T."/>
            <person name="Matsumura K."/>
            <person name="Nakajima Y."/>
            <person name="Mizuno T."/>
            <person name="Morinaga M."/>
            <person name="Sasaki M."/>
            <person name="Togashi T."/>
            <person name="Oyama M."/>
            <person name="Hata H."/>
            <person name="Watanabe M."/>
            <person name="Komatsu T."/>
            <person name="Mizushima-Sugano J."/>
            <person name="Satoh T."/>
            <person name="Shirai Y."/>
            <person name="Takahashi Y."/>
            <person name="Nakagawa K."/>
            <person name="Okumura K."/>
            <person name="Nagase T."/>
            <person name="Nomura N."/>
            <person name="Kikuchi H."/>
            <person name="Masuho Y."/>
            <person name="Yamashita R."/>
            <person name="Nakai K."/>
            <person name="Yada T."/>
            <person name="Nakamura Y."/>
            <person name="Ohara O."/>
            <person name="Isogai T."/>
            <person name="Sugano S."/>
        </authorList>
    </citation>
    <scope>NUCLEOTIDE SEQUENCE [LARGE SCALE MRNA] (ISOFORM 2)</scope>
    <source>
        <tissue>Cerebellum</tissue>
    </source>
</reference>
<reference key="4">
    <citation type="journal article" date="2006" name="Nature">
        <title>DNA sequence of human chromosome 17 and analysis of rearrangement in the human lineage.</title>
        <authorList>
            <person name="Zody M.C."/>
            <person name="Garber M."/>
            <person name="Adams D.J."/>
            <person name="Sharpe T."/>
            <person name="Harrow J."/>
            <person name="Lupski J.R."/>
            <person name="Nicholson C."/>
            <person name="Searle S.M."/>
            <person name="Wilming L."/>
            <person name="Young S.K."/>
            <person name="Abouelleil A."/>
            <person name="Allen N.R."/>
            <person name="Bi W."/>
            <person name="Bloom T."/>
            <person name="Borowsky M.L."/>
            <person name="Bugalter B.E."/>
            <person name="Butler J."/>
            <person name="Chang J.L."/>
            <person name="Chen C.-K."/>
            <person name="Cook A."/>
            <person name="Corum B."/>
            <person name="Cuomo C.A."/>
            <person name="de Jong P.J."/>
            <person name="DeCaprio D."/>
            <person name="Dewar K."/>
            <person name="FitzGerald M."/>
            <person name="Gilbert J."/>
            <person name="Gibson R."/>
            <person name="Gnerre S."/>
            <person name="Goldstein S."/>
            <person name="Grafham D.V."/>
            <person name="Grocock R."/>
            <person name="Hafez N."/>
            <person name="Hagopian D.S."/>
            <person name="Hart E."/>
            <person name="Norman C.H."/>
            <person name="Humphray S."/>
            <person name="Jaffe D.B."/>
            <person name="Jones M."/>
            <person name="Kamal M."/>
            <person name="Khodiyar V.K."/>
            <person name="LaButti K."/>
            <person name="Laird G."/>
            <person name="Lehoczky J."/>
            <person name="Liu X."/>
            <person name="Lokyitsang T."/>
            <person name="Loveland J."/>
            <person name="Lui A."/>
            <person name="Macdonald P."/>
            <person name="Major J.E."/>
            <person name="Matthews L."/>
            <person name="Mauceli E."/>
            <person name="McCarroll S.A."/>
            <person name="Mihalev A.H."/>
            <person name="Mudge J."/>
            <person name="Nguyen C."/>
            <person name="Nicol R."/>
            <person name="O'Leary S.B."/>
            <person name="Osoegawa K."/>
            <person name="Schwartz D.C."/>
            <person name="Shaw-Smith C."/>
            <person name="Stankiewicz P."/>
            <person name="Steward C."/>
            <person name="Swarbreck D."/>
            <person name="Venkataraman V."/>
            <person name="Whittaker C.A."/>
            <person name="Yang X."/>
            <person name="Zimmer A.R."/>
            <person name="Bradley A."/>
            <person name="Hubbard T."/>
            <person name="Birren B.W."/>
            <person name="Rogers J."/>
            <person name="Lander E.S."/>
            <person name="Nusbaum C."/>
        </authorList>
    </citation>
    <scope>NUCLEOTIDE SEQUENCE [LARGE SCALE GENOMIC DNA]</scope>
</reference>
<reference key="5">
    <citation type="journal article" date="2009" name="BMC Immunol.">
        <title>Identification of SH3 domain interaction partners of human FasL (CD178) by phage display screening.</title>
        <authorList>
            <person name="Voss M."/>
            <person name="Lettau M."/>
            <person name="Janssen O."/>
        </authorList>
    </citation>
    <scope>INTERACTION WITH FASLG</scope>
</reference>
<reference key="6">
    <citation type="journal article" date="2001" name="Hum. Genet.">
        <title>Novel mutations of MYO15A associated with profound deafness in consanguineous families and moderately severe hearing loss in a patient with Smith-Magenis syndrome.</title>
        <authorList>
            <person name="Liburd N."/>
            <person name="Ghosh M."/>
            <person name="Riazuddin S."/>
            <person name="Naz S."/>
            <person name="Khan S."/>
            <person name="Ahmed Z."/>
            <person name="Riazuddin S."/>
            <person name="Liang Y."/>
            <person name="Menon P.S.N."/>
            <person name="Smith T."/>
            <person name="Smith A.C.M."/>
            <person name="Chen K.-S."/>
            <person name="Lupski J.R."/>
            <person name="Wilcox E.R."/>
            <person name="Potocki L."/>
            <person name="Friedman T.B."/>
        </authorList>
    </citation>
    <scope>VARIANT DFNB3 HIS-2716</scope>
    <scope>VARIANT ILE-2205</scope>
</reference>
<reference key="7">
    <citation type="journal article" date="2014" name="PLoS ONE">
        <title>Whole exome sequencing identifies new causative mutations in Tunisian families with non-syndromic deafness.</title>
        <authorList>
            <person name="Riahi Z."/>
            <person name="Bonnet C."/>
            <person name="Zainine R."/>
            <person name="Louha M."/>
            <person name="Bouyacoub Y."/>
            <person name="Laroussi N."/>
            <person name="Chargui M."/>
            <person name="Kefi R."/>
            <person name="Jonard L."/>
            <person name="Dorboz I."/>
            <person name="Hardelin J.P."/>
            <person name="Salah S.B."/>
            <person name="Levilliers J."/>
            <person name="Weil D."/>
            <person name="McElreavey K."/>
            <person name="Boespflug O.T."/>
            <person name="Besbes G."/>
            <person name="Abdelhak S."/>
            <person name="Petit C."/>
        </authorList>
    </citation>
    <scope>INVOLVEMENT IN DFNB3</scope>
    <scope>VARIANT DFNB3 PRO-1806</scope>
</reference>